<keyword id="KW-0030">Aminoacyl-tRNA synthetase</keyword>
<keyword id="KW-0067">ATP-binding</keyword>
<keyword id="KW-0963">Cytoplasm</keyword>
<keyword id="KW-0436">Ligase</keyword>
<keyword id="KW-0547">Nucleotide-binding</keyword>
<keyword id="KW-0648">Protein biosynthesis</keyword>
<keyword id="KW-1185">Reference proteome</keyword>
<proteinExistence type="inferred from homology"/>
<protein>
    <recommendedName>
        <fullName evidence="1">Histidine--tRNA ligase</fullName>
        <ecNumber evidence="1">6.1.1.21</ecNumber>
    </recommendedName>
    <alternativeName>
        <fullName evidence="1">Histidyl-tRNA synthetase</fullName>
        <shortName evidence="1">HisRS</shortName>
    </alternativeName>
</protein>
<dbReference type="EC" id="6.1.1.21" evidence="1"/>
<dbReference type="EMBL" id="CP000148">
    <property type="protein sequence ID" value="ABB32142.1"/>
    <property type="molecule type" value="Genomic_DNA"/>
</dbReference>
<dbReference type="RefSeq" id="WP_004511931.1">
    <property type="nucleotide sequence ID" value="NC_007517.1"/>
</dbReference>
<dbReference type="SMR" id="Q39UD2"/>
<dbReference type="STRING" id="269799.Gmet_1913"/>
<dbReference type="KEGG" id="gme:Gmet_1913"/>
<dbReference type="eggNOG" id="COG0124">
    <property type="taxonomic scope" value="Bacteria"/>
</dbReference>
<dbReference type="HOGENOM" id="CLU_025113_1_1_7"/>
<dbReference type="Proteomes" id="UP000007073">
    <property type="component" value="Chromosome"/>
</dbReference>
<dbReference type="GO" id="GO:0005737">
    <property type="term" value="C:cytoplasm"/>
    <property type="evidence" value="ECO:0007669"/>
    <property type="project" value="UniProtKB-SubCell"/>
</dbReference>
<dbReference type="GO" id="GO:0005524">
    <property type="term" value="F:ATP binding"/>
    <property type="evidence" value="ECO:0007669"/>
    <property type="project" value="UniProtKB-UniRule"/>
</dbReference>
<dbReference type="GO" id="GO:0004821">
    <property type="term" value="F:histidine-tRNA ligase activity"/>
    <property type="evidence" value="ECO:0007669"/>
    <property type="project" value="UniProtKB-UniRule"/>
</dbReference>
<dbReference type="GO" id="GO:0006427">
    <property type="term" value="P:histidyl-tRNA aminoacylation"/>
    <property type="evidence" value="ECO:0007669"/>
    <property type="project" value="UniProtKB-UniRule"/>
</dbReference>
<dbReference type="CDD" id="cd00773">
    <property type="entry name" value="HisRS-like_core"/>
    <property type="match status" value="1"/>
</dbReference>
<dbReference type="CDD" id="cd00859">
    <property type="entry name" value="HisRS_anticodon"/>
    <property type="match status" value="1"/>
</dbReference>
<dbReference type="FunFam" id="3.30.930.10:FF:000005">
    <property type="entry name" value="Histidine--tRNA ligase"/>
    <property type="match status" value="1"/>
</dbReference>
<dbReference type="Gene3D" id="3.40.50.800">
    <property type="entry name" value="Anticodon-binding domain"/>
    <property type="match status" value="1"/>
</dbReference>
<dbReference type="Gene3D" id="3.30.930.10">
    <property type="entry name" value="Bira Bifunctional Protein, Domain 2"/>
    <property type="match status" value="1"/>
</dbReference>
<dbReference type="HAMAP" id="MF_00127">
    <property type="entry name" value="His_tRNA_synth"/>
    <property type="match status" value="1"/>
</dbReference>
<dbReference type="InterPro" id="IPR006195">
    <property type="entry name" value="aa-tRNA-synth_II"/>
</dbReference>
<dbReference type="InterPro" id="IPR045864">
    <property type="entry name" value="aa-tRNA-synth_II/BPL/LPL"/>
</dbReference>
<dbReference type="InterPro" id="IPR004154">
    <property type="entry name" value="Anticodon-bd"/>
</dbReference>
<dbReference type="InterPro" id="IPR036621">
    <property type="entry name" value="Anticodon-bd_dom_sf"/>
</dbReference>
<dbReference type="InterPro" id="IPR015807">
    <property type="entry name" value="His-tRNA-ligase"/>
</dbReference>
<dbReference type="InterPro" id="IPR041715">
    <property type="entry name" value="HisRS-like_core"/>
</dbReference>
<dbReference type="InterPro" id="IPR004516">
    <property type="entry name" value="HisRS/HisZ"/>
</dbReference>
<dbReference type="InterPro" id="IPR033656">
    <property type="entry name" value="HisRS_anticodon"/>
</dbReference>
<dbReference type="NCBIfam" id="TIGR00442">
    <property type="entry name" value="hisS"/>
    <property type="match status" value="1"/>
</dbReference>
<dbReference type="PANTHER" id="PTHR43707:SF1">
    <property type="entry name" value="HISTIDINE--TRNA LIGASE, MITOCHONDRIAL-RELATED"/>
    <property type="match status" value="1"/>
</dbReference>
<dbReference type="PANTHER" id="PTHR43707">
    <property type="entry name" value="HISTIDYL-TRNA SYNTHETASE"/>
    <property type="match status" value="1"/>
</dbReference>
<dbReference type="Pfam" id="PF03129">
    <property type="entry name" value="HGTP_anticodon"/>
    <property type="match status" value="1"/>
</dbReference>
<dbReference type="Pfam" id="PF13393">
    <property type="entry name" value="tRNA-synt_His"/>
    <property type="match status" value="1"/>
</dbReference>
<dbReference type="PIRSF" id="PIRSF001549">
    <property type="entry name" value="His-tRNA_synth"/>
    <property type="match status" value="1"/>
</dbReference>
<dbReference type="SUPFAM" id="SSF52954">
    <property type="entry name" value="Class II aaRS ABD-related"/>
    <property type="match status" value="1"/>
</dbReference>
<dbReference type="SUPFAM" id="SSF55681">
    <property type="entry name" value="Class II aaRS and biotin synthetases"/>
    <property type="match status" value="1"/>
</dbReference>
<dbReference type="PROSITE" id="PS50862">
    <property type="entry name" value="AA_TRNA_LIGASE_II"/>
    <property type="match status" value="1"/>
</dbReference>
<organism>
    <name type="scientific">Geobacter metallireducens (strain ATCC 53774 / DSM 7210 / GS-15)</name>
    <dbReference type="NCBI Taxonomy" id="269799"/>
    <lineage>
        <taxon>Bacteria</taxon>
        <taxon>Pseudomonadati</taxon>
        <taxon>Thermodesulfobacteriota</taxon>
        <taxon>Desulfuromonadia</taxon>
        <taxon>Geobacterales</taxon>
        <taxon>Geobacteraceae</taxon>
        <taxon>Geobacter</taxon>
    </lineage>
</organism>
<evidence type="ECO:0000255" key="1">
    <source>
        <dbReference type="HAMAP-Rule" id="MF_00127"/>
    </source>
</evidence>
<feature type="chain" id="PRO_1000016366" description="Histidine--tRNA ligase">
    <location>
        <begin position="1"/>
        <end position="413"/>
    </location>
</feature>
<gene>
    <name evidence="1" type="primary">hisS</name>
    <name type="ordered locus">Gmet_1913</name>
</gene>
<sequence>MITGIKGFNDILPGEVERWQHIEATARRVFGLYGYAEIRVPILEKTELFCRSIGDTTDIVEKEMYSFVDKGENAVTMRPEGTASVMRAYIEHKLYAQDPVAKLYYMGPMFRYERPQKGRYRQFHQIGAEVTGVTDPKVDAQVLTMLCHFFAELGLTEPTLQINSLGCPECRPVYREALKSFLRERLDRLCDDCKRRYETNPLRALDCKSAHCKEATADAPAMLDHLCAGCDDHFAATRRHLERAGTPYSINNRMVRGLDYYTRTTFELVTGLLGAQSAVAAGGRYDGLIADLDGPAVPGIGFAMGVERVALLLGQQEFARRPDLFIAALGTEAQDEAFRLMCGLQRLGVSVEMDYEGKSLKSQMRRSDKFNSRFTLIIGSDEMASGRATLKAMDTGTQSDVLLDPTAIAGQVK</sequence>
<reference key="1">
    <citation type="journal article" date="2009" name="BMC Microbiol.">
        <title>The genome sequence of Geobacter metallireducens: features of metabolism, physiology and regulation common and dissimilar to Geobacter sulfurreducens.</title>
        <authorList>
            <person name="Aklujkar M."/>
            <person name="Krushkal J."/>
            <person name="DiBartolo G."/>
            <person name="Lapidus A."/>
            <person name="Land M.L."/>
            <person name="Lovley D.R."/>
        </authorList>
    </citation>
    <scope>NUCLEOTIDE SEQUENCE [LARGE SCALE GENOMIC DNA]</scope>
    <source>
        <strain>ATCC 53774 / DSM 7210 / GS-15</strain>
    </source>
</reference>
<comment type="catalytic activity">
    <reaction evidence="1">
        <text>tRNA(His) + L-histidine + ATP = L-histidyl-tRNA(His) + AMP + diphosphate + H(+)</text>
        <dbReference type="Rhea" id="RHEA:17313"/>
        <dbReference type="Rhea" id="RHEA-COMP:9665"/>
        <dbReference type="Rhea" id="RHEA-COMP:9689"/>
        <dbReference type="ChEBI" id="CHEBI:15378"/>
        <dbReference type="ChEBI" id="CHEBI:30616"/>
        <dbReference type="ChEBI" id="CHEBI:33019"/>
        <dbReference type="ChEBI" id="CHEBI:57595"/>
        <dbReference type="ChEBI" id="CHEBI:78442"/>
        <dbReference type="ChEBI" id="CHEBI:78527"/>
        <dbReference type="ChEBI" id="CHEBI:456215"/>
        <dbReference type="EC" id="6.1.1.21"/>
    </reaction>
</comment>
<comment type="subunit">
    <text evidence="1">Homodimer.</text>
</comment>
<comment type="subcellular location">
    <subcellularLocation>
        <location evidence="1">Cytoplasm</location>
    </subcellularLocation>
</comment>
<comment type="similarity">
    <text evidence="1">Belongs to the class-II aminoacyl-tRNA synthetase family.</text>
</comment>
<name>SYH_GEOMG</name>
<accession>Q39UD2</accession>